<feature type="chain" id="PRO_1000096191" description="Elongation factor P">
    <location>
        <begin position="1"/>
        <end position="189"/>
    </location>
</feature>
<gene>
    <name evidence="1" type="primary">efp</name>
    <name type="ordered locus">PputW619_1468</name>
</gene>
<reference key="1">
    <citation type="submission" date="2008-02" db="EMBL/GenBank/DDBJ databases">
        <title>Complete sequence of Pseudomonas putida W619.</title>
        <authorList>
            <person name="Copeland A."/>
            <person name="Lucas S."/>
            <person name="Lapidus A."/>
            <person name="Barry K."/>
            <person name="Detter J.C."/>
            <person name="Glavina del Rio T."/>
            <person name="Dalin E."/>
            <person name="Tice H."/>
            <person name="Pitluck S."/>
            <person name="Chain P."/>
            <person name="Malfatti S."/>
            <person name="Shin M."/>
            <person name="Vergez L."/>
            <person name="Schmutz J."/>
            <person name="Larimer F."/>
            <person name="Land M."/>
            <person name="Hauser L."/>
            <person name="Kyrpides N."/>
            <person name="Kim E."/>
            <person name="Taghavi S."/>
            <person name="Vangronsveld D."/>
            <person name="van der Lelie D."/>
            <person name="Richardson P."/>
        </authorList>
    </citation>
    <scope>NUCLEOTIDE SEQUENCE [LARGE SCALE GENOMIC DNA]</scope>
    <source>
        <strain>W619</strain>
    </source>
</reference>
<evidence type="ECO:0000255" key="1">
    <source>
        <dbReference type="HAMAP-Rule" id="MF_00141"/>
    </source>
</evidence>
<keyword id="KW-0963">Cytoplasm</keyword>
<keyword id="KW-0251">Elongation factor</keyword>
<keyword id="KW-0648">Protein biosynthesis</keyword>
<organism>
    <name type="scientific">Pseudomonas putida (strain W619)</name>
    <dbReference type="NCBI Taxonomy" id="390235"/>
    <lineage>
        <taxon>Bacteria</taxon>
        <taxon>Pseudomonadati</taxon>
        <taxon>Pseudomonadota</taxon>
        <taxon>Gammaproteobacteria</taxon>
        <taxon>Pseudomonadales</taxon>
        <taxon>Pseudomonadaceae</taxon>
        <taxon>Pseudomonas</taxon>
    </lineage>
</organism>
<comment type="function">
    <text evidence="1">Involved in peptide bond synthesis. Stimulates efficient translation and peptide-bond synthesis on native or reconstituted 70S ribosomes in vitro. Probably functions indirectly by altering the affinity of the ribosome for aminoacyl-tRNA, thus increasing their reactivity as acceptors for peptidyl transferase.</text>
</comment>
<comment type="pathway">
    <text evidence="1">Protein biosynthesis; polypeptide chain elongation.</text>
</comment>
<comment type="subcellular location">
    <subcellularLocation>
        <location evidence="1">Cytoplasm</location>
    </subcellularLocation>
</comment>
<comment type="similarity">
    <text evidence="1">Belongs to the elongation factor P family.</text>
</comment>
<dbReference type="EMBL" id="CP000949">
    <property type="protein sequence ID" value="ACA71973.1"/>
    <property type="molecule type" value="Genomic_DNA"/>
</dbReference>
<dbReference type="SMR" id="B1J4V1"/>
<dbReference type="STRING" id="390235.PputW619_1468"/>
<dbReference type="KEGG" id="ppw:PputW619_1468"/>
<dbReference type="eggNOG" id="COG0231">
    <property type="taxonomic scope" value="Bacteria"/>
</dbReference>
<dbReference type="HOGENOM" id="CLU_074944_2_1_6"/>
<dbReference type="OrthoDB" id="9801844at2"/>
<dbReference type="UniPathway" id="UPA00345"/>
<dbReference type="GO" id="GO:0005737">
    <property type="term" value="C:cytoplasm"/>
    <property type="evidence" value="ECO:0007669"/>
    <property type="project" value="UniProtKB-SubCell"/>
</dbReference>
<dbReference type="GO" id="GO:0003746">
    <property type="term" value="F:translation elongation factor activity"/>
    <property type="evidence" value="ECO:0007669"/>
    <property type="project" value="UniProtKB-UniRule"/>
</dbReference>
<dbReference type="GO" id="GO:0043043">
    <property type="term" value="P:peptide biosynthetic process"/>
    <property type="evidence" value="ECO:0007669"/>
    <property type="project" value="InterPro"/>
</dbReference>
<dbReference type="CDD" id="cd04470">
    <property type="entry name" value="S1_EF-P_repeat_1"/>
    <property type="match status" value="1"/>
</dbReference>
<dbReference type="CDD" id="cd05794">
    <property type="entry name" value="S1_EF-P_repeat_2"/>
    <property type="match status" value="1"/>
</dbReference>
<dbReference type="FunFam" id="2.30.30.30:FF:000003">
    <property type="entry name" value="Elongation factor P"/>
    <property type="match status" value="1"/>
</dbReference>
<dbReference type="FunFam" id="2.40.50.140:FF:000004">
    <property type="entry name" value="Elongation factor P"/>
    <property type="match status" value="1"/>
</dbReference>
<dbReference type="Gene3D" id="2.30.30.30">
    <property type="match status" value="1"/>
</dbReference>
<dbReference type="Gene3D" id="2.40.50.140">
    <property type="entry name" value="Nucleic acid-binding proteins"/>
    <property type="match status" value="2"/>
</dbReference>
<dbReference type="HAMAP" id="MF_00141">
    <property type="entry name" value="EF_P"/>
    <property type="match status" value="1"/>
</dbReference>
<dbReference type="InterPro" id="IPR015365">
    <property type="entry name" value="Elong-fact-P_C"/>
</dbReference>
<dbReference type="InterPro" id="IPR012340">
    <property type="entry name" value="NA-bd_OB-fold"/>
</dbReference>
<dbReference type="InterPro" id="IPR014722">
    <property type="entry name" value="Rib_uL2_dom2"/>
</dbReference>
<dbReference type="InterPro" id="IPR020599">
    <property type="entry name" value="Transl_elong_fac_P/YeiP"/>
</dbReference>
<dbReference type="InterPro" id="IPR013185">
    <property type="entry name" value="Transl_elong_KOW-like"/>
</dbReference>
<dbReference type="InterPro" id="IPR001059">
    <property type="entry name" value="Transl_elong_P/YeiP_cen"/>
</dbReference>
<dbReference type="InterPro" id="IPR011768">
    <property type="entry name" value="Transl_elongation_fac_P"/>
</dbReference>
<dbReference type="InterPro" id="IPR008991">
    <property type="entry name" value="Translation_prot_SH3-like_sf"/>
</dbReference>
<dbReference type="NCBIfam" id="TIGR00038">
    <property type="entry name" value="efp"/>
    <property type="match status" value="1"/>
</dbReference>
<dbReference type="NCBIfam" id="NF001810">
    <property type="entry name" value="PRK00529.1"/>
    <property type="match status" value="1"/>
</dbReference>
<dbReference type="PANTHER" id="PTHR30053">
    <property type="entry name" value="ELONGATION FACTOR P"/>
    <property type="match status" value="1"/>
</dbReference>
<dbReference type="PANTHER" id="PTHR30053:SF12">
    <property type="entry name" value="ELONGATION FACTOR P (EF-P) FAMILY PROTEIN"/>
    <property type="match status" value="1"/>
</dbReference>
<dbReference type="Pfam" id="PF01132">
    <property type="entry name" value="EFP"/>
    <property type="match status" value="1"/>
</dbReference>
<dbReference type="Pfam" id="PF08207">
    <property type="entry name" value="EFP_N"/>
    <property type="match status" value="1"/>
</dbReference>
<dbReference type="Pfam" id="PF09285">
    <property type="entry name" value="Elong-fact-P_C"/>
    <property type="match status" value="1"/>
</dbReference>
<dbReference type="PIRSF" id="PIRSF005901">
    <property type="entry name" value="EF-P"/>
    <property type="match status" value="1"/>
</dbReference>
<dbReference type="SMART" id="SM01185">
    <property type="entry name" value="EFP"/>
    <property type="match status" value="1"/>
</dbReference>
<dbReference type="SMART" id="SM00841">
    <property type="entry name" value="Elong-fact-P_C"/>
    <property type="match status" value="1"/>
</dbReference>
<dbReference type="SUPFAM" id="SSF50249">
    <property type="entry name" value="Nucleic acid-binding proteins"/>
    <property type="match status" value="2"/>
</dbReference>
<dbReference type="SUPFAM" id="SSF50104">
    <property type="entry name" value="Translation proteins SH3-like domain"/>
    <property type="match status" value="1"/>
</dbReference>
<protein>
    <recommendedName>
        <fullName evidence="1">Elongation factor P</fullName>
        <shortName evidence="1">EF-P</shortName>
    </recommendedName>
</protein>
<name>EFP_PSEPW</name>
<accession>B1J4V1</accession>
<proteinExistence type="inferred from homology"/>
<sequence length="189" mass="21332">MKTGKELKPGTVLRIDNDPWLVQKAEFTKSGRNSAIMKTKLKNLLTGYKTETVYGADDKLDDVILDRKEATLSFISGDSYTFMDTTDYTMYELNAEDIDAVLPYIEEGMEDICEAVFFEGRLVSVELPTTISRQVVYTENAARGDTSGKVMKPAKLKNGTEIQVADFIQIDEWIDIDTRDNSFKGRSKK</sequence>